<organism>
    <name type="scientific">Saccharomyces cerevisiae (strain ATCC 204508 / S288c)</name>
    <name type="common">Baker's yeast</name>
    <dbReference type="NCBI Taxonomy" id="559292"/>
    <lineage>
        <taxon>Eukaryota</taxon>
        <taxon>Fungi</taxon>
        <taxon>Dikarya</taxon>
        <taxon>Ascomycota</taxon>
        <taxon>Saccharomycotina</taxon>
        <taxon>Saccharomycetes</taxon>
        <taxon>Saccharomycetales</taxon>
        <taxon>Saccharomycetaceae</taxon>
        <taxon>Saccharomyces</taxon>
    </lineage>
</organism>
<name>ORC1_YEAST</name>
<evidence type="ECO:0000250" key="1">
    <source>
        <dbReference type="UniProtKB" id="Q13415"/>
    </source>
</evidence>
<evidence type="ECO:0000255" key="2"/>
<evidence type="ECO:0000255" key="3">
    <source>
        <dbReference type="PROSITE-ProRule" id="PRU00370"/>
    </source>
</evidence>
<evidence type="ECO:0000256" key="4">
    <source>
        <dbReference type="SAM" id="MobiDB-lite"/>
    </source>
</evidence>
<evidence type="ECO:0000269" key="5">
    <source>
    </source>
</evidence>
<evidence type="ECO:0000269" key="6">
    <source>
    </source>
</evidence>
<evidence type="ECO:0000269" key="7">
    <source>
    </source>
</evidence>
<evidence type="ECO:0000305" key="8"/>
<evidence type="ECO:0007744" key="9">
    <source>
    </source>
</evidence>
<evidence type="ECO:0007744" key="10">
    <source>
    </source>
</evidence>
<evidence type="ECO:0007744" key="11">
    <source>
    </source>
</evidence>
<evidence type="ECO:0007829" key="12">
    <source>
        <dbReference type="PDB" id="1M4Z"/>
    </source>
</evidence>
<evidence type="ECO:0007829" key="13">
    <source>
        <dbReference type="PDB" id="1ZBX"/>
    </source>
</evidence>
<evidence type="ECO:0007829" key="14">
    <source>
        <dbReference type="PDB" id="5ZR1"/>
    </source>
</evidence>
<evidence type="ECO:0007829" key="15">
    <source>
        <dbReference type="PDB" id="6OM3"/>
    </source>
</evidence>
<evidence type="ECO:0007829" key="16">
    <source>
        <dbReference type="PDB" id="7E9C"/>
    </source>
</evidence>
<evidence type="ECO:0007829" key="17">
    <source>
        <dbReference type="PDB" id="7TJF"/>
    </source>
</evidence>
<evidence type="ECO:0007829" key="18">
    <source>
        <dbReference type="PDB" id="7TJH"/>
    </source>
</evidence>
<evidence type="ECO:0007829" key="19">
    <source>
        <dbReference type="PDB" id="7TJI"/>
    </source>
</evidence>
<reference key="1">
    <citation type="journal article" date="1995" name="Cell">
        <title>The multidomain structure of Orc1p reveals similarity to regulators of DNA replication and transcriptional silencing.</title>
        <authorList>
            <person name="Bell S.P."/>
            <person name="Mitchell J."/>
            <person name="Leber J."/>
            <person name="Kobayashi R."/>
            <person name="Stillman B."/>
        </authorList>
    </citation>
    <scope>NUCLEOTIDE SEQUENCE [GENOMIC DNA]</scope>
    <scope>PROTEIN SEQUENCE OF 381-408; 532-550; 642-653 AND 726-732</scope>
</reference>
<reference key="2">
    <citation type="journal article" date="1995" name="Mol. Biol. Cell">
        <title>The origin recognition complex in silencing, cell cycle progression, and DNA replication.</title>
        <authorList>
            <person name="Loo S."/>
            <person name="Fox C.A."/>
            <person name="Rine J."/>
            <person name="Kobayashi R."/>
            <person name="Stillman B."/>
            <person name="Bell S.P."/>
        </authorList>
    </citation>
    <scope>NUCLEOTIDE SEQUENCE [GENOMIC DNA]</scope>
</reference>
<reference key="3">
    <citation type="journal article" date="1997" name="Nature">
        <title>The nucleotide sequence of Saccharomyces cerevisiae chromosome XIII.</title>
        <authorList>
            <person name="Bowman S."/>
            <person name="Churcher C.M."/>
            <person name="Badcock K."/>
            <person name="Brown D."/>
            <person name="Chillingworth T."/>
            <person name="Connor R."/>
            <person name="Dedman K."/>
            <person name="Devlin K."/>
            <person name="Gentles S."/>
            <person name="Hamlin N."/>
            <person name="Hunt S."/>
            <person name="Jagels K."/>
            <person name="Lye G."/>
            <person name="Moule S."/>
            <person name="Odell C."/>
            <person name="Pearson D."/>
            <person name="Rajandream M.A."/>
            <person name="Rice P."/>
            <person name="Skelton J."/>
            <person name="Walsh S.V."/>
            <person name="Whitehead S."/>
            <person name="Barrell B.G."/>
        </authorList>
    </citation>
    <scope>NUCLEOTIDE SEQUENCE [LARGE SCALE GENOMIC DNA]</scope>
    <source>
        <strain>ATCC 204508 / S288c</strain>
    </source>
</reference>
<reference key="4">
    <citation type="journal article" date="2014" name="G3 (Bethesda)">
        <title>The reference genome sequence of Saccharomyces cerevisiae: Then and now.</title>
        <authorList>
            <person name="Engel S.R."/>
            <person name="Dietrich F.S."/>
            <person name="Fisk D.G."/>
            <person name="Binkley G."/>
            <person name="Balakrishnan R."/>
            <person name="Costanzo M.C."/>
            <person name="Dwight S.S."/>
            <person name="Hitz B.C."/>
            <person name="Karra K."/>
            <person name="Nash R.S."/>
            <person name="Weng S."/>
            <person name="Wong E.D."/>
            <person name="Lloyd P."/>
            <person name="Skrzypek M.S."/>
            <person name="Miyasato S.R."/>
            <person name="Simison M."/>
            <person name="Cherry J.M."/>
        </authorList>
    </citation>
    <scope>GENOME REANNOTATION</scope>
    <source>
        <strain>ATCC 204508 / S288c</strain>
    </source>
</reference>
<reference key="5">
    <citation type="journal article" date="2000" name="Genes Cells">
        <title>Interactions between Mcm10p and other replication factors are required for proper initiation and elongation of chromosomal DNA replication in Saccharomyces cerevisiae.</title>
        <authorList>
            <person name="Kawasaki Y."/>
            <person name="Hiraga S."/>
            <person name="Sugino A."/>
        </authorList>
    </citation>
    <scope>INTERACTION MCM10</scope>
</reference>
<reference key="6">
    <citation type="journal article" date="2003" name="Nature">
        <title>Global analysis of protein expression in yeast.</title>
        <authorList>
            <person name="Ghaemmaghami S."/>
            <person name="Huh W.-K."/>
            <person name="Bower K."/>
            <person name="Howson R.W."/>
            <person name="Belle A."/>
            <person name="Dephoure N."/>
            <person name="O'Shea E.K."/>
            <person name="Weissman J.S."/>
        </authorList>
    </citation>
    <scope>LEVEL OF PROTEIN EXPRESSION [LARGE SCALE ANALYSIS]</scope>
</reference>
<reference key="7">
    <citation type="journal article" date="2007" name="FEMS Yeast Res.">
        <title>Interaction between ORC and Cdt1p of Saccharomyces cerevisiae.</title>
        <authorList>
            <person name="Asano T."/>
            <person name="Makise M."/>
            <person name="Takehara M."/>
            <person name="Mizushima T."/>
        </authorList>
    </citation>
    <scope>FUNCTION</scope>
    <scope>INTERACTION WITH TAH11</scope>
</reference>
<reference key="8">
    <citation type="journal article" date="2007" name="J. Proteome Res.">
        <title>Large-scale phosphorylation analysis of alpha-factor-arrested Saccharomyces cerevisiae.</title>
        <authorList>
            <person name="Li X."/>
            <person name="Gerber S.A."/>
            <person name="Rudner A.D."/>
            <person name="Beausoleil S.A."/>
            <person name="Haas W."/>
            <person name="Villen J."/>
            <person name="Elias J.E."/>
            <person name="Gygi S.P."/>
        </authorList>
    </citation>
    <scope>PHOSPHORYLATION [LARGE SCALE ANALYSIS] AT SER-237</scope>
    <scope>IDENTIFICATION BY MASS SPECTROMETRY [LARGE SCALE ANALYSIS]</scope>
    <source>
        <strain>ADR376</strain>
    </source>
</reference>
<reference key="9">
    <citation type="journal article" date="2008" name="Mol. Cell. Proteomics">
        <title>A multidimensional chromatography technology for in-depth phosphoproteome analysis.</title>
        <authorList>
            <person name="Albuquerque C.P."/>
            <person name="Smolka M.B."/>
            <person name="Payne S.H."/>
            <person name="Bafna V."/>
            <person name="Eng J."/>
            <person name="Zhou H."/>
        </authorList>
    </citation>
    <scope>PHOSPHORYLATION [LARGE SCALE ANALYSIS] AT SER-237</scope>
    <scope>IDENTIFICATION BY MASS SPECTROMETRY [LARGE SCALE ANALYSIS]</scope>
</reference>
<reference key="10">
    <citation type="journal article" date="2009" name="Science">
        <title>Global analysis of Cdk1 substrate phosphorylation sites provides insights into evolution.</title>
        <authorList>
            <person name="Holt L.J."/>
            <person name="Tuch B.B."/>
            <person name="Villen J."/>
            <person name="Johnson A.D."/>
            <person name="Gygi S.P."/>
            <person name="Morgan D.O."/>
        </authorList>
    </citation>
    <scope>PHOSPHORYLATION [LARGE SCALE ANALYSIS] AT SER-237</scope>
    <scope>IDENTIFICATION BY MASS SPECTROMETRY [LARGE SCALE ANALYSIS]</scope>
</reference>
<gene>
    <name type="primary">ORC1</name>
    <name type="ordered locus">YML065W</name>
</gene>
<comment type="function">
    <text evidence="7">Component of the origin recognition complex (ORC) that binds origins of replication. It has a role in both chromosomal replication and mating type transcriptional silencing. Binds to the ARS consensus sequence (ACS) of origins of replication.</text>
</comment>
<comment type="subunit">
    <text evidence="5 7">Component of the origin recognition complex (ORC) composed of at least ORC1, ORC2, ORC3, ORC4, ORC5 and ORC6. Interacts with MCM10 and TAH11.</text>
</comment>
<comment type="interaction">
    <interactant intactId="EBI-12568">
        <id>P54784</id>
    </interactant>
    <interactant intactId="EBI-12580">
        <id>P54791</id>
        <label>ORC4</label>
    </interactant>
    <organismsDiffer>false</organismsDiffer>
    <experiments>7</experiments>
</comment>
<comment type="interaction">
    <interactant intactId="EBI-12568">
        <id>P54784</id>
    </interactant>
    <interactant intactId="EBI-12588">
        <id>P38826</id>
        <label>ORC6</label>
    </interactant>
    <organismsDiffer>false</organismsDiffer>
    <experiments>5</experiments>
</comment>
<comment type="interaction">
    <interactant intactId="EBI-12568">
        <id>P54784</id>
    </interactant>
    <interactant intactId="EBI-17211">
        <id>P21691</id>
        <label>SIR1</label>
    </interactant>
    <organismsDiffer>false</organismsDiffer>
    <experiments>3</experiments>
</comment>
<comment type="subcellular location">
    <subcellularLocation>
        <location>Nucleus</location>
    </subcellularLocation>
</comment>
<comment type="domain">
    <text>The N-terminus is dedicated to mating-type repression.</text>
</comment>
<comment type="miscellaneous">
    <text evidence="6">Present with 3930 molecules/cell in log phase SD medium.</text>
</comment>
<comment type="similarity">
    <text evidence="8">Belongs to the ORC1 family.</text>
</comment>
<protein>
    <recommendedName>
        <fullName>Origin recognition complex subunit 1</fullName>
    </recommendedName>
    <alternativeName>
        <fullName>Origin recognition complex 120 kDa subunit</fullName>
    </alternativeName>
</protein>
<keyword id="KW-0002">3D-structure</keyword>
<keyword id="KW-0067">ATP-binding</keyword>
<keyword id="KW-0903">Direct protein sequencing</keyword>
<keyword id="KW-0235">DNA replication</keyword>
<keyword id="KW-0238">DNA-binding</keyword>
<keyword id="KW-0460">Magnesium</keyword>
<keyword id="KW-0479">Metal-binding</keyword>
<keyword id="KW-0547">Nucleotide-binding</keyword>
<keyword id="KW-0539">Nucleus</keyword>
<keyword id="KW-0597">Phosphoprotein</keyword>
<keyword id="KW-1185">Reference proteome</keyword>
<feature type="chain" id="PRO_0000127074" description="Origin recognition complex subunit 1">
    <location>
        <begin position="1"/>
        <end position="914"/>
    </location>
</feature>
<feature type="domain" description="BAH" evidence="3">
    <location>
        <begin position="48"/>
        <end position="188"/>
    </location>
</feature>
<feature type="region of interest" description="Disordered" evidence="4">
    <location>
        <begin position="218"/>
        <end position="343"/>
    </location>
</feature>
<feature type="compositionally biased region" description="Basic and acidic residues" evidence="4">
    <location>
        <begin position="221"/>
        <end position="230"/>
    </location>
</feature>
<feature type="compositionally biased region" description="Acidic residues" evidence="4">
    <location>
        <begin position="247"/>
        <end position="296"/>
    </location>
</feature>
<feature type="compositionally biased region" description="Basic residues" evidence="4">
    <location>
        <begin position="303"/>
        <end position="313"/>
    </location>
</feature>
<feature type="binding site" evidence="1">
    <location>
        <position position="435"/>
    </location>
    <ligand>
        <name>ATP</name>
        <dbReference type="ChEBI" id="CHEBI:30616"/>
    </ligand>
</feature>
<feature type="binding site" evidence="1">
    <location>
        <begin position="479"/>
        <end position="487"/>
    </location>
    <ligand>
        <name>ATP</name>
        <dbReference type="ChEBI" id="CHEBI:30616"/>
    </ligand>
</feature>
<feature type="binding site" evidence="1">
    <location>
        <position position="566"/>
    </location>
    <ligand>
        <name>Mg(2+)</name>
        <dbReference type="ChEBI" id="CHEBI:18420"/>
    </ligand>
</feature>
<feature type="binding site" evidence="1">
    <location>
        <position position="567"/>
    </location>
    <ligand>
        <name>ATP</name>
        <dbReference type="ChEBI" id="CHEBI:30616"/>
    </ligand>
</feature>
<feature type="binding site" evidence="1">
    <location>
        <position position="567"/>
    </location>
    <ligand>
        <name>Mg(2+)</name>
        <dbReference type="ChEBI" id="CHEBI:18420"/>
    </ligand>
</feature>
<feature type="binding site" evidence="1">
    <location>
        <position position="600"/>
    </location>
    <ligand>
        <name>ATP</name>
        <dbReference type="ChEBI" id="CHEBI:30616"/>
    </ligand>
</feature>
<feature type="binding site" evidence="1">
    <location>
        <position position="704"/>
    </location>
    <ligand>
        <name>ATP</name>
        <dbReference type="ChEBI" id="CHEBI:30616"/>
    </ligand>
</feature>
<feature type="binding site" evidence="2">
    <location>
        <begin position="726"/>
        <end position="733"/>
    </location>
    <ligand>
        <name>ATP</name>
        <dbReference type="ChEBI" id="CHEBI:30616"/>
    </ligand>
</feature>
<feature type="modified residue" description="Phosphoserine" evidence="9 10 11">
    <location>
        <position position="237"/>
    </location>
</feature>
<feature type="helix" evidence="12">
    <location>
        <begin position="6"/>
        <end position="9"/>
    </location>
</feature>
<feature type="strand" evidence="12">
    <location>
        <begin position="11"/>
        <end position="16"/>
    </location>
</feature>
<feature type="strand" evidence="12">
    <location>
        <begin position="18"/>
        <end position="20"/>
    </location>
</feature>
<feature type="strand" evidence="16">
    <location>
        <begin position="24"/>
        <end position="27"/>
    </location>
</feature>
<feature type="strand" evidence="12">
    <location>
        <begin position="38"/>
        <end position="43"/>
    </location>
</feature>
<feature type="turn" evidence="12">
    <location>
        <begin position="44"/>
        <end position="46"/>
    </location>
</feature>
<feature type="strand" evidence="15">
    <location>
        <begin position="48"/>
        <end position="50"/>
    </location>
</feature>
<feature type="strand" evidence="12">
    <location>
        <begin position="55"/>
        <end position="60"/>
    </location>
</feature>
<feature type="turn" evidence="12">
    <location>
        <begin position="61"/>
        <end position="64"/>
    </location>
</feature>
<feature type="strand" evidence="12">
    <location>
        <begin position="65"/>
        <end position="76"/>
    </location>
</feature>
<feature type="turn" evidence="12">
    <location>
        <begin position="78"/>
        <end position="80"/>
    </location>
</feature>
<feature type="strand" evidence="12">
    <location>
        <begin position="83"/>
        <end position="91"/>
    </location>
</feature>
<feature type="helix" evidence="12">
    <location>
        <begin position="93"/>
        <end position="95"/>
    </location>
</feature>
<feature type="helix" evidence="12">
    <location>
        <begin position="98"/>
        <end position="105"/>
    </location>
</feature>
<feature type="helix" evidence="12">
    <location>
        <begin position="107"/>
        <end position="111"/>
    </location>
</feature>
<feature type="helix" evidence="12">
    <location>
        <begin position="116"/>
        <end position="126"/>
    </location>
</feature>
<feature type="strand" evidence="12">
    <location>
        <begin position="131"/>
        <end position="141"/>
    </location>
</feature>
<feature type="helix" evidence="12">
    <location>
        <begin position="143"/>
        <end position="145"/>
    </location>
</feature>
<feature type="strand" evidence="12">
    <location>
        <begin position="146"/>
        <end position="153"/>
    </location>
</feature>
<feature type="helix" evidence="12">
    <location>
        <begin position="155"/>
        <end position="161"/>
    </location>
</feature>
<feature type="helix" evidence="12">
    <location>
        <begin position="162"/>
        <end position="164"/>
    </location>
</feature>
<feature type="turn" evidence="12">
    <location>
        <begin position="167"/>
        <end position="169"/>
    </location>
</feature>
<feature type="strand" evidence="12">
    <location>
        <begin position="170"/>
        <end position="176"/>
    </location>
</feature>
<feature type="turn" evidence="13">
    <location>
        <begin position="179"/>
        <end position="181"/>
    </location>
</feature>
<feature type="strand" evidence="13">
    <location>
        <begin position="182"/>
        <end position="186"/>
    </location>
</feature>
<feature type="helix" evidence="12">
    <location>
        <begin position="189"/>
        <end position="196"/>
    </location>
</feature>
<feature type="helix" evidence="12">
    <location>
        <begin position="201"/>
        <end position="210"/>
    </location>
</feature>
<feature type="helix" evidence="18">
    <location>
        <begin position="375"/>
        <end position="377"/>
    </location>
</feature>
<feature type="strand" evidence="18">
    <location>
        <begin position="378"/>
        <end position="382"/>
    </location>
</feature>
<feature type="helix" evidence="18">
    <location>
        <begin position="388"/>
        <end position="390"/>
    </location>
</feature>
<feature type="strand" evidence="18">
    <location>
        <begin position="391"/>
        <end position="393"/>
    </location>
</feature>
<feature type="helix" evidence="17">
    <location>
        <begin position="394"/>
        <end position="396"/>
    </location>
</feature>
<feature type="turn" evidence="14">
    <location>
        <begin position="399"/>
        <end position="404"/>
    </location>
</feature>
<feature type="helix" evidence="18">
    <location>
        <begin position="407"/>
        <end position="410"/>
    </location>
</feature>
<feature type="helix" evidence="18">
    <location>
        <begin position="424"/>
        <end position="429"/>
    </location>
</feature>
<feature type="helix" evidence="18">
    <location>
        <begin position="454"/>
        <end position="468"/>
    </location>
</feature>
<feature type="strand" evidence="18">
    <location>
        <begin position="473"/>
        <end position="480"/>
    </location>
</feature>
<feature type="helix" evidence="18">
    <location>
        <begin position="485"/>
        <end position="500"/>
    </location>
</feature>
<feature type="turn" evidence="18">
    <location>
        <begin position="501"/>
        <end position="503"/>
    </location>
</feature>
<feature type="strand" evidence="18">
    <location>
        <begin position="508"/>
        <end position="514"/>
    </location>
</feature>
<feature type="helix" evidence="19">
    <location>
        <begin position="515"/>
        <end position="517"/>
    </location>
</feature>
<feature type="helix" evidence="18">
    <location>
        <begin position="523"/>
        <end position="533"/>
    </location>
</feature>
<feature type="helix" evidence="18">
    <location>
        <begin position="539"/>
        <end position="552"/>
    </location>
</feature>
<feature type="helix" evidence="18">
    <location>
        <begin position="555"/>
        <end position="557"/>
    </location>
</feature>
<feature type="strand" evidence="18">
    <location>
        <begin position="560"/>
        <end position="567"/>
    </location>
</feature>
<feature type="helix" evidence="18">
    <location>
        <begin position="568"/>
        <end position="571"/>
    </location>
</feature>
<feature type="strand" evidence="14">
    <location>
        <begin position="572"/>
        <end position="574"/>
    </location>
</feature>
<feature type="helix" evidence="18">
    <location>
        <begin position="577"/>
        <end position="584"/>
    </location>
</feature>
<feature type="helix" evidence="18">
    <location>
        <begin position="585"/>
        <end position="587"/>
    </location>
</feature>
<feature type="strand" evidence="18">
    <location>
        <begin position="593"/>
        <end position="600"/>
    </location>
</feature>
<feature type="helix" evidence="18">
    <location>
        <begin position="604"/>
        <end position="607"/>
    </location>
</feature>
<feature type="helix" evidence="18">
    <location>
        <begin position="611"/>
        <end position="617"/>
    </location>
</feature>
<feature type="strand" evidence="18">
    <location>
        <begin position="622"/>
        <end position="624"/>
    </location>
</feature>
<feature type="helix" evidence="18">
    <location>
        <begin position="629"/>
        <end position="639"/>
    </location>
</feature>
<feature type="turn" evidence="18">
    <location>
        <begin position="640"/>
        <end position="645"/>
    </location>
</feature>
<feature type="strand" evidence="18">
    <location>
        <begin position="646"/>
        <end position="650"/>
    </location>
</feature>
<feature type="turn" evidence="18">
    <location>
        <begin position="652"/>
        <end position="654"/>
    </location>
</feature>
<feature type="strand" evidence="18">
    <location>
        <begin position="657"/>
        <end position="659"/>
    </location>
</feature>
<feature type="strand" evidence="18">
    <location>
        <begin position="678"/>
        <end position="684"/>
    </location>
</feature>
<feature type="helix" evidence="18">
    <location>
        <begin position="686"/>
        <end position="699"/>
    </location>
</feature>
<feature type="helix" evidence="18">
    <location>
        <begin position="703"/>
        <end position="725"/>
    </location>
</feature>
<feature type="strand" evidence="18">
    <location>
        <begin position="770"/>
        <end position="773"/>
    </location>
</feature>
<feature type="helix" evidence="18">
    <location>
        <begin position="775"/>
        <end position="784"/>
    </location>
</feature>
<feature type="helix" evidence="18">
    <location>
        <begin position="790"/>
        <end position="794"/>
    </location>
</feature>
<feature type="helix" evidence="18">
    <location>
        <begin position="799"/>
        <end position="815"/>
    </location>
</feature>
<feature type="strand" evidence="18">
    <location>
        <begin position="818"/>
        <end position="821"/>
    </location>
</feature>
<feature type="helix" evidence="18">
    <location>
        <begin position="822"/>
        <end position="835"/>
    </location>
</feature>
<feature type="turn" evidence="14">
    <location>
        <begin position="836"/>
        <end position="838"/>
    </location>
</feature>
<feature type="helix" evidence="18">
    <location>
        <begin position="840"/>
        <end position="851"/>
    </location>
</feature>
<feature type="strand" evidence="17">
    <location>
        <begin position="855"/>
        <end position="857"/>
    </location>
</feature>
<feature type="helix" evidence="18">
    <location>
        <begin position="866"/>
        <end position="875"/>
    </location>
</feature>
<feature type="strand" evidence="18">
    <location>
        <begin position="878"/>
        <end position="881"/>
    </location>
</feature>
<feature type="turn" evidence="18">
    <location>
        <begin position="887"/>
        <end position="889"/>
    </location>
</feature>
<feature type="strand" evidence="18">
    <location>
        <begin position="891"/>
        <end position="894"/>
    </location>
</feature>
<feature type="helix" evidence="18">
    <location>
        <begin position="898"/>
        <end position="907"/>
    </location>
</feature>
<feature type="helix" evidence="18">
    <location>
        <begin position="911"/>
        <end position="913"/>
    </location>
</feature>
<dbReference type="EMBL" id="U34860">
    <property type="protein sequence ID" value="AAB38248.1"/>
    <property type="molecule type" value="Genomic_DNA"/>
</dbReference>
<dbReference type="EMBL" id="Z38114">
    <property type="protein sequence ID" value="CAA86256.1"/>
    <property type="molecule type" value="Genomic_DNA"/>
</dbReference>
<dbReference type="EMBL" id="BK006946">
    <property type="protein sequence ID" value="DAA09832.1"/>
    <property type="molecule type" value="Genomic_DNA"/>
</dbReference>
<dbReference type="PIR" id="S48333">
    <property type="entry name" value="S48333"/>
</dbReference>
<dbReference type="RefSeq" id="NP_013646.1">
    <property type="nucleotide sequence ID" value="NM_001182424.1"/>
</dbReference>
<dbReference type="PDB" id="1M4Z">
    <property type="method" value="X-ray"/>
    <property type="resolution" value="2.20 A"/>
    <property type="chains" value="A/B=1-235"/>
</dbReference>
<dbReference type="PDB" id="1ZBX">
    <property type="method" value="X-ray"/>
    <property type="resolution" value="2.50 A"/>
    <property type="chains" value="A=1-219"/>
</dbReference>
<dbReference type="PDB" id="1ZHI">
    <property type="method" value="X-ray"/>
    <property type="resolution" value="2.70 A"/>
    <property type="chains" value="A=1-219"/>
</dbReference>
<dbReference type="PDB" id="5V8F">
    <property type="method" value="EM"/>
    <property type="resolution" value="3.90 A"/>
    <property type="chains" value="A=1-913"/>
</dbReference>
<dbReference type="PDB" id="5ZR1">
    <property type="method" value="EM"/>
    <property type="resolution" value="3.00 A"/>
    <property type="chains" value="A=1-914"/>
</dbReference>
<dbReference type="PDB" id="6OM3">
    <property type="method" value="X-ray"/>
    <property type="resolution" value="3.30 A"/>
    <property type="chains" value="K/L/W/X=2-214"/>
</dbReference>
<dbReference type="PDB" id="6RQC">
    <property type="method" value="EM"/>
    <property type="resolution" value="4.40 A"/>
    <property type="chains" value="A=1-914"/>
</dbReference>
<dbReference type="PDB" id="6WGC">
    <property type="method" value="EM"/>
    <property type="resolution" value="4.30 A"/>
    <property type="chains" value="A=1-913"/>
</dbReference>
<dbReference type="PDB" id="6WGG">
    <property type="method" value="EM"/>
    <property type="resolution" value="8.10 A"/>
    <property type="chains" value="A=1-913"/>
</dbReference>
<dbReference type="PDB" id="6WGI">
    <property type="method" value="EM"/>
    <property type="resolution" value="10.00 A"/>
    <property type="chains" value="A=1-913"/>
</dbReference>
<dbReference type="PDB" id="7E9C">
    <property type="method" value="EM"/>
    <property type="resolution" value="3.50 A"/>
    <property type="chains" value="K=2-219"/>
</dbReference>
<dbReference type="PDB" id="7E9F">
    <property type="method" value="EM"/>
    <property type="resolution" value="4.00 A"/>
    <property type="chains" value="K/L=2-219"/>
</dbReference>
<dbReference type="PDB" id="7MCA">
    <property type="method" value="EM"/>
    <property type="resolution" value="3.60 A"/>
    <property type="chains" value="A=1-914"/>
</dbReference>
<dbReference type="PDB" id="7TJF">
    <property type="method" value="EM"/>
    <property type="resolution" value="2.60 A"/>
    <property type="chains" value="A=1-914"/>
</dbReference>
<dbReference type="PDB" id="7TJH">
    <property type="method" value="EM"/>
    <property type="resolution" value="2.50 A"/>
    <property type="chains" value="A=1-914"/>
</dbReference>
<dbReference type="PDB" id="7TJI">
    <property type="method" value="EM"/>
    <property type="resolution" value="2.70 A"/>
    <property type="chains" value="A=1-914"/>
</dbReference>
<dbReference type="PDB" id="7TJJ">
    <property type="method" value="EM"/>
    <property type="resolution" value="2.70 A"/>
    <property type="chains" value="A=1-914"/>
</dbReference>
<dbReference type="PDB" id="7TJK">
    <property type="method" value="EM"/>
    <property type="resolution" value="2.70 A"/>
    <property type="chains" value="A=1-914"/>
</dbReference>
<dbReference type="PDB" id="9BCX">
    <property type="method" value="EM"/>
    <property type="resolution" value="6.10 A"/>
    <property type="chains" value="B=1-914"/>
</dbReference>
<dbReference type="PDB" id="9GJP">
    <property type="method" value="EM"/>
    <property type="resolution" value="3.40 A"/>
    <property type="chains" value="A=1-914"/>
</dbReference>
<dbReference type="PDB" id="9GJW">
    <property type="method" value="EM"/>
    <property type="resolution" value="3.30 A"/>
    <property type="chains" value="A=1-914"/>
</dbReference>
<dbReference type="PDB" id="9GM5">
    <property type="method" value="EM"/>
    <property type="resolution" value="3.70 A"/>
    <property type="chains" value="A=1-914"/>
</dbReference>
<dbReference type="PDBsum" id="1M4Z"/>
<dbReference type="PDBsum" id="1ZBX"/>
<dbReference type="PDBsum" id="1ZHI"/>
<dbReference type="PDBsum" id="5V8F"/>
<dbReference type="PDBsum" id="5ZR1"/>
<dbReference type="PDBsum" id="6OM3"/>
<dbReference type="PDBsum" id="6RQC"/>
<dbReference type="PDBsum" id="6WGC"/>
<dbReference type="PDBsum" id="6WGG"/>
<dbReference type="PDBsum" id="6WGI"/>
<dbReference type="PDBsum" id="7E9C"/>
<dbReference type="PDBsum" id="7E9F"/>
<dbReference type="PDBsum" id="7MCA"/>
<dbReference type="PDBsum" id="7TJF"/>
<dbReference type="PDBsum" id="7TJH"/>
<dbReference type="PDBsum" id="7TJI"/>
<dbReference type="PDBsum" id="7TJJ"/>
<dbReference type="PDBsum" id="7TJK"/>
<dbReference type="PDBsum" id="9BCX"/>
<dbReference type="PDBsum" id="9GJP"/>
<dbReference type="PDBsum" id="9GJW"/>
<dbReference type="PDBsum" id="9GM5"/>
<dbReference type="EMDB" id="EMD-21662"/>
<dbReference type="EMDB" id="EMD-21665"/>
<dbReference type="EMDB" id="EMD-21666"/>
<dbReference type="EMDB" id="EMD-23755"/>
<dbReference type="EMDB" id="EMD-25924"/>
<dbReference type="EMDB" id="EMD-25925"/>
<dbReference type="EMDB" id="EMD-25926"/>
<dbReference type="EMDB" id="EMD-25927"/>
<dbReference type="EMDB" id="EMD-25928"/>
<dbReference type="EMDB" id="EMD-31029"/>
<dbReference type="EMDB" id="EMD-31030"/>
<dbReference type="EMDB" id="EMD-44441"/>
<dbReference type="EMDB" id="EMD-4980"/>
<dbReference type="EMDB" id="EMD-51401"/>
<dbReference type="EMDB" id="EMD-51407"/>
<dbReference type="EMDB" id="EMD-51441"/>
<dbReference type="EMDB" id="EMD-6941"/>
<dbReference type="EMDB" id="EMD-8540"/>
<dbReference type="SMR" id="P54784"/>
<dbReference type="BioGRID" id="35101">
    <property type="interactions" value="672"/>
</dbReference>
<dbReference type="ComplexPortal" id="CPX-768">
    <property type="entry name" value="Nuclear origin recognition complex"/>
</dbReference>
<dbReference type="DIP" id="DIP-2284N"/>
<dbReference type="FunCoup" id="P54784">
    <property type="interactions" value="584"/>
</dbReference>
<dbReference type="IntAct" id="P54784">
    <property type="interactions" value="38"/>
</dbReference>
<dbReference type="MINT" id="P54784"/>
<dbReference type="STRING" id="4932.YML065W"/>
<dbReference type="iPTMnet" id="P54784"/>
<dbReference type="PaxDb" id="4932-YML065W"/>
<dbReference type="PeptideAtlas" id="P54784"/>
<dbReference type="EnsemblFungi" id="YML065W_mRNA">
    <property type="protein sequence ID" value="YML065W"/>
    <property type="gene ID" value="YML065W"/>
</dbReference>
<dbReference type="GeneID" id="854937"/>
<dbReference type="KEGG" id="sce:YML065W"/>
<dbReference type="AGR" id="SGD:S000004530"/>
<dbReference type="SGD" id="S000004530">
    <property type="gene designation" value="ORC1"/>
</dbReference>
<dbReference type="VEuPathDB" id="FungiDB:YML065W"/>
<dbReference type="eggNOG" id="KOG1514">
    <property type="taxonomic scope" value="Eukaryota"/>
</dbReference>
<dbReference type="GeneTree" id="ENSGT00530000063498"/>
<dbReference type="HOGENOM" id="CLU_012774_1_1_1"/>
<dbReference type="InParanoid" id="P54784"/>
<dbReference type="OMA" id="IMYNFFN"/>
<dbReference type="OrthoDB" id="1926878at2759"/>
<dbReference type="BioCyc" id="YEAST:G3O-32660-MONOMER"/>
<dbReference type="Reactome" id="R-SCE-176187">
    <property type="pathway name" value="Activation of ATR in response to replication stress"/>
</dbReference>
<dbReference type="Reactome" id="R-SCE-68616">
    <property type="pathway name" value="Assembly of the ORC complex at the origin of replication"/>
</dbReference>
<dbReference type="Reactome" id="R-SCE-68689">
    <property type="pathway name" value="CDC6 association with the ORC:origin complex"/>
</dbReference>
<dbReference type="Reactome" id="R-SCE-68949">
    <property type="pathway name" value="Orc1 removal from chromatin"/>
</dbReference>
<dbReference type="Reactome" id="R-SCE-68962">
    <property type="pathway name" value="Activation of the pre-replicative complex"/>
</dbReference>
<dbReference type="BioGRID-ORCS" id="854937">
    <property type="hits" value="0 hits in 10 CRISPR screens"/>
</dbReference>
<dbReference type="EvolutionaryTrace" id="P54784"/>
<dbReference type="PRO" id="PR:P54784"/>
<dbReference type="Proteomes" id="UP000002311">
    <property type="component" value="Chromosome XIII"/>
</dbReference>
<dbReference type="RNAct" id="P54784">
    <property type="molecule type" value="protein"/>
</dbReference>
<dbReference type="GO" id="GO:0031261">
    <property type="term" value="C:DNA replication preinitiation complex"/>
    <property type="evidence" value="ECO:0000314"/>
    <property type="project" value="SGD"/>
</dbReference>
<dbReference type="GO" id="GO:0005664">
    <property type="term" value="C:nuclear origin of replication recognition complex"/>
    <property type="evidence" value="ECO:0000314"/>
    <property type="project" value="SGD"/>
</dbReference>
<dbReference type="GO" id="GO:0005656">
    <property type="term" value="C:nuclear pre-replicative complex"/>
    <property type="evidence" value="ECO:0000314"/>
    <property type="project" value="SGD"/>
</dbReference>
<dbReference type="GO" id="GO:0005654">
    <property type="term" value="C:nucleoplasm"/>
    <property type="evidence" value="ECO:0000304"/>
    <property type="project" value="Reactome"/>
</dbReference>
<dbReference type="GO" id="GO:0005634">
    <property type="term" value="C:nucleus"/>
    <property type="evidence" value="ECO:0000314"/>
    <property type="project" value="SGD"/>
</dbReference>
<dbReference type="GO" id="GO:0005524">
    <property type="term" value="F:ATP binding"/>
    <property type="evidence" value="ECO:0000314"/>
    <property type="project" value="SGD"/>
</dbReference>
<dbReference type="GO" id="GO:0016887">
    <property type="term" value="F:ATP hydrolysis activity"/>
    <property type="evidence" value="ECO:0000315"/>
    <property type="project" value="SGD"/>
</dbReference>
<dbReference type="GO" id="GO:0003682">
    <property type="term" value="F:chromatin binding"/>
    <property type="evidence" value="ECO:0000314"/>
    <property type="project" value="SGD"/>
</dbReference>
<dbReference type="GO" id="GO:0003688">
    <property type="term" value="F:DNA replication origin binding"/>
    <property type="evidence" value="ECO:0000314"/>
    <property type="project" value="SGD"/>
</dbReference>
<dbReference type="GO" id="GO:0046872">
    <property type="term" value="F:metal ion binding"/>
    <property type="evidence" value="ECO:0007669"/>
    <property type="project" value="UniProtKB-KW"/>
</dbReference>
<dbReference type="GO" id="GO:0031491">
    <property type="term" value="F:nucleosome binding"/>
    <property type="evidence" value="ECO:0000314"/>
    <property type="project" value="SGD"/>
</dbReference>
<dbReference type="GO" id="GO:0006270">
    <property type="term" value="P:DNA replication initiation"/>
    <property type="evidence" value="ECO:0000315"/>
    <property type="project" value="SGD"/>
</dbReference>
<dbReference type="GO" id="GO:0043007">
    <property type="term" value="P:maintenance of rDNA"/>
    <property type="evidence" value="ECO:0000314"/>
    <property type="project" value="SGD"/>
</dbReference>
<dbReference type="GO" id="GO:0033314">
    <property type="term" value="P:mitotic DNA replication checkpoint signaling"/>
    <property type="evidence" value="ECO:0000318"/>
    <property type="project" value="GO_Central"/>
</dbReference>
<dbReference type="GO" id="GO:0034728">
    <property type="term" value="P:nucleosome organization"/>
    <property type="evidence" value="ECO:0000315"/>
    <property type="project" value="SGD"/>
</dbReference>
<dbReference type="GO" id="GO:0006267">
    <property type="term" value="P:pre-replicative complex assembly involved in nuclear cell cycle DNA replication"/>
    <property type="evidence" value="ECO:0000314"/>
    <property type="project" value="SGD"/>
</dbReference>
<dbReference type="GO" id="GO:0030466">
    <property type="term" value="P:silent mating-type cassette heterochromatin formation"/>
    <property type="evidence" value="ECO:0000314"/>
    <property type="project" value="SGD"/>
</dbReference>
<dbReference type="CDD" id="cd00009">
    <property type="entry name" value="AAA"/>
    <property type="match status" value="1"/>
</dbReference>
<dbReference type="CDD" id="cd04720">
    <property type="entry name" value="BAH_Orc1p_Yeast"/>
    <property type="match status" value="1"/>
</dbReference>
<dbReference type="FunFam" id="1.10.8.60:FF:000205">
    <property type="entry name" value="Origin recognition complex subunit 1"/>
    <property type="match status" value="1"/>
</dbReference>
<dbReference type="FunFam" id="3.40.50.300:FF:000199">
    <property type="entry name" value="Origin recognition complex subunit 1"/>
    <property type="match status" value="1"/>
</dbReference>
<dbReference type="Gene3D" id="1.10.8.60">
    <property type="match status" value="1"/>
</dbReference>
<dbReference type="Gene3D" id="2.30.30.490">
    <property type="match status" value="1"/>
</dbReference>
<dbReference type="Gene3D" id="3.40.50.300">
    <property type="entry name" value="P-loop containing nucleotide triphosphate hydrolases"/>
    <property type="match status" value="1"/>
</dbReference>
<dbReference type="InterPro" id="IPR003593">
    <property type="entry name" value="AAA+_ATPase"/>
</dbReference>
<dbReference type="InterPro" id="IPR041083">
    <property type="entry name" value="AAA_lid_10"/>
</dbReference>
<dbReference type="InterPro" id="IPR003959">
    <property type="entry name" value="ATPase_AAA_core"/>
</dbReference>
<dbReference type="InterPro" id="IPR001025">
    <property type="entry name" value="BAH_dom"/>
</dbReference>
<dbReference type="InterPro" id="IPR043151">
    <property type="entry name" value="BAH_sf"/>
</dbReference>
<dbReference type="InterPro" id="IPR050311">
    <property type="entry name" value="ORC1/CDC6"/>
</dbReference>
<dbReference type="InterPro" id="IPR048867">
    <property type="entry name" value="ORC1_wHTH"/>
</dbReference>
<dbReference type="InterPro" id="IPR027417">
    <property type="entry name" value="P-loop_NTPase"/>
</dbReference>
<dbReference type="PANTHER" id="PTHR10763">
    <property type="entry name" value="CELL DIVISION CONTROL PROTEIN 6-RELATED"/>
    <property type="match status" value="1"/>
</dbReference>
<dbReference type="PANTHER" id="PTHR10763:SF23">
    <property type="entry name" value="ORIGIN RECOGNITION COMPLEX SUBUNIT 1"/>
    <property type="match status" value="1"/>
</dbReference>
<dbReference type="Pfam" id="PF00004">
    <property type="entry name" value="AAA"/>
    <property type="match status" value="1"/>
</dbReference>
<dbReference type="Pfam" id="PF17872">
    <property type="entry name" value="AAA_lid_10"/>
    <property type="match status" value="1"/>
</dbReference>
<dbReference type="Pfam" id="PF01426">
    <property type="entry name" value="BAH"/>
    <property type="match status" value="1"/>
</dbReference>
<dbReference type="Pfam" id="PF21312">
    <property type="entry name" value="ORC1_wHTH"/>
    <property type="match status" value="1"/>
</dbReference>
<dbReference type="SMART" id="SM00382">
    <property type="entry name" value="AAA"/>
    <property type="match status" value="1"/>
</dbReference>
<dbReference type="SMART" id="SM00439">
    <property type="entry name" value="BAH"/>
    <property type="match status" value="1"/>
</dbReference>
<dbReference type="SUPFAM" id="SSF82061">
    <property type="entry name" value="BAH domain"/>
    <property type="match status" value="1"/>
</dbReference>
<dbReference type="SUPFAM" id="SSF52540">
    <property type="entry name" value="P-loop containing nucleoside triphosphate hydrolases"/>
    <property type="match status" value="1"/>
</dbReference>
<dbReference type="PROSITE" id="PS51038">
    <property type="entry name" value="BAH"/>
    <property type="match status" value="1"/>
</dbReference>
<sequence>MAKTLKDLQGWEIITTDEQGNIIDGGQKRLRRRGAKTEHYLKRSSDGIKLGRGDSVVMHNEAAGTYSVYMIQELRLNTLNNVVELWALTYLRWFEVNPLAHYRQFNPDANILNRPLNYYNKLFSETANKNELYLTAELAELQLFNFIRVANVMDGSKWEVLKGNVDPERDFTVRYICEPTGEKFVDINIEDVKAYIKKVEPREAQEYLKDLTLPSKKKEIKRGPQKKDKATQTAQISDAETRATDITDNEDGNEDESSDYESPSDIDVSEDMDSGEISADELEEEEDEEEDEDEEEKEARHTNSPRKRGRKIKLGKDDIDASVQPPPKKRGRKPKDPSKPRQMLLISSCRANNTPVIRKFTKKNVARAKKKYTPFSKRFKSIAAIPDLTSLPEFYGNSSELMASRFENKLKTTQKHQIVETIFSKVKKQLNSSYVKEEILKSANFQDYLPARENEFASIYLSAYSAIESDSATTIYVAGTPGVGKTLTVREVVKELLSSSAQREIPDFLYVEINGLKMVKPTDCYETLWNKVSGERLTWAASMESLEFYFKRVPKNKKKTIVVLLDELDAMVTKSQDIMYNFFNWTTYENAKLIVIAVANTMDLPERQLGNKITSRIGFTRIMFTGYTHEELKNIIDLRLKGLNDSFFYVDTKTGNAILIDAAGNDTTVKQTLPEDVRKVRLRMSADAIEIASRKVASVSGDARRALKVCKRAAEIAEKHYMAKHGYGYDGKTVIEDENEEQIYDDEDKDLIESNKAKDDNDDDDDNDGVQTVHITHVMKALNETLNSHVITFMTRLSFTAKLFIYALLNLMKKNGSQEQELGDIVDEIKLLIEVNGSNKFVMEIAKTLFQQGSDNISEQLRIISWDFVLNQLLDAGILFKQTMKNDRICCVKLNISVEEAKRAMNEDETLRNL</sequence>
<proteinExistence type="evidence at protein level"/>
<accession>P54784</accession>
<accession>D6VZA8</accession>